<proteinExistence type="evidence at protein level"/>
<accession>P57784</accession>
<accession>Q3U7R8</accession>
<accession>Q8K2W4</accession>
<accession>Q91YW1</accession>
<accession>Q9JKQ3</accession>
<sequence length="255" mass="28357">MVKLTAELIEQAAQYTNAVRDRELDLRGYKIPVIENLGATLDQFDAIDFSDNEIRKLDGFPLLRRLKTLLVNNNRICRIGEGLDQALPCLTELILTNNSLVELGDLDPLASLKSLTYLSILRNPVTNKKHYRLYVIYKVPQVRVLDFQKVKLKERQEAEKMFKGKRGAQLAKDIARRSKTFNPGAGLPTDKKKGGPSAGDVEAIKNAIANASTLAEVERLKGLLQSGQIPGRERRSGPSDEGEEEIEDDTVTNGS</sequence>
<name>RU2A_MOUSE</name>
<gene>
    <name type="primary">Snrpa1</name>
</gene>
<feature type="chain" id="PRO_0000074175" description="U2 small nuclear ribonucleoprotein A'">
    <location>
        <begin position="1"/>
        <end position="255"/>
    </location>
</feature>
<feature type="repeat" description="LRR 1">
    <location>
        <begin position="20"/>
        <end position="41"/>
    </location>
</feature>
<feature type="repeat" description="LRR 2">
    <location>
        <begin position="43"/>
        <end position="64"/>
    </location>
</feature>
<feature type="repeat" description="LRR 3">
    <location>
        <begin position="65"/>
        <end position="86"/>
    </location>
</feature>
<feature type="repeat" description="LRR 4">
    <location>
        <begin position="89"/>
        <end position="110"/>
    </location>
</feature>
<feature type="domain" description="LRRCT">
    <location>
        <begin position="123"/>
        <end position="161"/>
    </location>
</feature>
<feature type="region of interest" description="Disordered" evidence="2">
    <location>
        <begin position="179"/>
        <end position="199"/>
    </location>
</feature>
<feature type="region of interest" description="Disordered" evidence="2">
    <location>
        <begin position="222"/>
        <end position="255"/>
    </location>
</feature>
<feature type="compositionally biased region" description="Acidic residues" evidence="2">
    <location>
        <begin position="240"/>
        <end position="255"/>
    </location>
</feature>
<feature type="modified residue" description="N6-acetyllysine; alternate" evidence="4">
    <location>
        <position position="172"/>
    </location>
</feature>
<feature type="modified residue" description="Phosphoserine" evidence="1">
    <location>
        <position position="178"/>
    </location>
</feature>
<feature type="modified residue" description="Phosphoserine" evidence="1">
    <location>
        <position position="197"/>
    </location>
</feature>
<feature type="modified residue" description="Phosphoserine" evidence="1">
    <location>
        <position position="236"/>
    </location>
</feature>
<feature type="modified residue" description="Phosphoserine" evidence="1">
    <location>
        <position position="255"/>
    </location>
</feature>
<feature type="cross-link" description="Glycyl lysine isopeptide (Lys-Gly) (interchain with G-Cter in SUMO2); alternate" evidence="1">
    <location>
        <position position="172"/>
    </location>
</feature>
<feature type="cross-link" description="Glycyl lysine isopeptide (Lys-Gly) (interchain with G-Cter in SUMO2)" evidence="1">
    <location>
        <position position="221"/>
    </location>
</feature>
<feature type="sequence conflict" description="In Ref. 3; AAH13777." evidence="3" ref="3">
    <original>L</original>
    <variation>S</variation>
    <location>
        <position position="63"/>
    </location>
</feature>
<feature type="sequence conflict" description="In Ref. 1; AAF35392." evidence="3" ref="1">
    <original>KD</original>
    <variation>N</variation>
    <location>
        <begin position="172"/>
        <end position="173"/>
    </location>
</feature>
<keyword id="KW-0007">Acetylation</keyword>
<keyword id="KW-1017">Isopeptide bond</keyword>
<keyword id="KW-0433">Leucine-rich repeat</keyword>
<keyword id="KW-0507">mRNA processing</keyword>
<keyword id="KW-0508">mRNA splicing</keyword>
<keyword id="KW-0539">Nucleus</keyword>
<keyword id="KW-0597">Phosphoprotein</keyword>
<keyword id="KW-1185">Reference proteome</keyword>
<keyword id="KW-0677">Repeat</keyword>
<keyword id="KW-0687">Ribonucleoprotein</keyword>
<keyword id="KW-0694">RNA-binding</keyword>
<keyword id="KW-0747">Spliceosome</keyword>
<keyword id="KW-0832">Ubl conjugation</keyword>
<protein>
    <recommendedName>
        <fullName>U2 small nuclear ribonucleoprotein A'</fullName>
        <shortName>U2 snRNP A'</shortName>
    </recommendedName>
</protein>
<organism>
    <name type="scientific">Mus musculus</name>
    <name type="common">Mouse</name>
    <dbReference type="NCBI Taxonomy" id="10090"/>
    <lineage>
        <taxon>Eukaryota</taxon>
        <taxon>Metazoa</taxon>
        <taxon>Chordata</taxon>
        <taxon>Craniata</taxon>
        <taxon>Vertebrata</taxon>
        <taxon>Euteleostomi</taxon>
        <taxon>Mammalia</taxon>
        <taxon>Eutheria</taxon>
        <taxon>Euarchontoglires</taxon>
        <taxon>Glires</taxon>
        <taxon>Rodentia</taxon>
        <taxon>Myomorpha</taxon>
        <taxon>Muroidea</taxon>
        <taxon>Muridae</taxon>
        <taxon>Murinae</taxon>
        <taxon>Mus</taxon>
        <taxon>Mus</taxon>
    </lineage>
</organism>
<dbReference type="EMBL" id="AF230356">
    <property type="protein sequence ID" value="AAF35392.1"/>
    <property type="molecule type" value="mRNA"/>
</dbReference>
<dbReference type="EMBL" id="BC013777">
    <property type="protein sequence ID" value="AAH13777.1"/>
    <property type="molecule type" value="mRNA"/>
</dbReference>
<dbReference type="EMBL" id="BC029642">
    <property type="protein sequence ID" value="AAH29642.1"/>
    <property type="molecule type" value="mRNA"/>
</dbReference>
<dbReference type="EMBL" id="AK088438">
    <property type="protein sequence ID" value="BAC40353.1"/>
    <property type="molecule type" value="mRNA"/>
</dbReference>
<dbReference type="EMBL" id="AK151800">
    <property type="protein sequence ID" value="BAE30700.1"/>
    <property type="molecule type" value="mRNA"/>
</dbReference>
<dbReference type="EMBL" id="AK152546">
    <property type="protein sequence ID" value="BAE31301.1"/>
    <property type="molecule type" value="mRNA"/>
</dbReference>
<dbReference type="EMBL" id="AK153502">
    <property type="protein sequence ID" value="BAE32048.1"/>
    <property type="molecule type" value="mRNA"/>
</dbReference>
<dbReference type="CCDS" id="CCDS21342.1"/>
<dbReference type="RefSeq" id="NP_067311.4">
    <property type="nucleotide sequence ID" value="NM_021336.4"/>
</dbReference>
<dbReference type="SMR" id="P57784"/>
<dbReference type="BioGRID" id="213157">
    <property type="interactions" value="21"/>
</dbReference>
<dbReference type="FunCoup" id="P57784">
    <property type="interactions" value="4400"/>
</dbReference>
<dbReference type="IntAct" id="P57784">
    <property type="interactions" value="11"/>
</dbReference>
<dbReference type="MINT" id="P57784"/>
<dbReference type="STRING" id="10090.ENSMUSP00000117947"/>
<dbReference type="GlyGen" id="P57784">
    <property type="glycosylation" value="2 sites, 1 N-linked glycan (1 site), 1 O-linked glycan (1 site)"/>
</dbReference>
<dbReference type="iPTMnet" id="P57784"/>
<dbReference type="PhosphoSitePlus" id="P57784"/>
<dbReference type="SwissPalm" id="P57784"/>
<dbReference type="jPOST" id="P57784"/>
<dbReference type="PaxDb" id="10090-ENSMUSP00000117947"/>
<dbReference type="PeptideAtlas" id="P57784"/>
<dbReference type="ProteomicsDB" id="260872"/>
<dbReference type="Pumba" id="P57784"/>
<dbReference type="Antibodypedia" id="29301">
    <property type="antibodies" value="119 antibodies from 27 providers"/>
</dbReference>
<dbReference type="DNASU" id="68981"/>
<dbReference type="Ensembl" id="ENSMUST00000153609.8">
    <property type="protein sequence ID" value="ENSMUSP00000117947.2"/>
    <property type="gene ID" value="ENSMUSG00000030512.14"/>
</dbReference>
<dbReference type="GeneID" id="68981"/>
<dbReference type="KEGG" id="mmu:68981"/>
<dbReference type="UCSC" id="uc009hgy.2">
    <property type="organism name" value="mouse"/>
</dbReference>
<dbReference type="AGR" id="MGI:1916231"/>
<dbReference type="CTD" id="6627"/>
<dbReference type="MGI" id="MGI:1916231">
    <property type="gene designation" value="Snrpa1"/>
</dbReference>
<dbReference type="VEuPathDB" id="HostDB:ENSMUSG00000030512"/>
<dbReference type="eggNOG" id="KOG1644">
    <property type="taxonomic scope" value="Eukaryota"/>
</dbReference>
<dbReference type="GeneTree" id="ENSGT00940000153289"/>
<dbReference type="HOGENOM" id="CLU_061027_0_1_1"/>
<dbReference type="InParanoid" id="P57784"/>
<dbReference type="OMA" id="PNYREYM"/>
<dbReference type="OrthoDB" id="433501at2759"/>
<dbReference type="PhylomeDB" id="P57784"/>
<dbReference type="TreeFam" id="TF313776"/>
<dbReference type="Reactome" id="R-MMU-72163">
    <property type="pathway name" value="mRNA Splicing - Major Pathway"/>
</dbReference>
<dbReference type="BioGRID-ORCS" id="68981">
    <property type="hits" value="27 hits in 81 CRISPR screens"/>
</dbReference>
<dbReference type="ChiTaRS" id="Snrpa1">
    <property type="organism name" value="mouse"/>
</dbReference>
<dbReference type="PRO" id="PR:P57784"/>
<dbReference type="Proteomes" id="UP000000589">
    <property type="component" value="Chromosome 7"/>
</dbReference>
<dbReference type="RNAct" id="P57784">
    <property type="molecule type" value="protein"/>
</dbReference>
<dbReference type="Bgee" id="ENSMUSG00000030512">
    <property type="expression patterns" value="Expressed in respiratory primordium and 278 other cell types or tissues"/>
</dbReference>
<dbReference type="ExpressionAtlas" id="P57784">
    <property type="expression patterns" value="baseline and differential"/>
</dbReference>
<dbReference type="GO" id="GO:0016607">
    <property type="term" value="C:nuclear speck"/>
    <property type="evidence" value="ECO:0007669"/>
    <property type="project" value="Ensembl"/>
</dbReference>
<dbReference type="GO" id="GO:0005634">
    <property type="term" value="C:nucleus"/>
    <property type="evidence" value="ECO:0000250"/>
    <property type="project" value="UniProtKB"/>
</dbReference>
<dbReference type="GO" id="GO:0005686">
    <property type="term" value="C:U2 snRNP"/>
    <property type="evidence" value="ECO:0000314"/>
    <property type="project" value="MGI"/>
</dbReference>
<dbReference type="GO" id="GO:0071007">
    <property type="term" value="C:U2-type catalytic step 2 spliceosome"/>
    <property type="evidence" value="ECO:0000250"/>
    <property type="project" value="UniProtKB"/>
</dbReference>
<dbReference type="GO" id="GO:0071005">
    <property type="term" value="C:U2-type precatalytic spliceosome"/>
    <property type="evidence" value="ECO:0007669"/>
    <property type="project" value="Ensembl"/>
</dbReference>
<dbReference type="GO" id="GO:0005684">
    <property type="term" value="C:U2-type spliceosomal complex"/>
    <property type="evidence" value="ECO:0000250"/>
    <property type="project" value="UniProtKB"/>
</dbReference>
<dbReference type="GO" id="GO:0030620">
    <property type="term" value="F:U2 snRNA binding"/>
    <property type="evidence" value="ECO:0007669"/>
    <property type="project" value="InterPro"/>
</dbReference>
<dbReference type="GO" id="GO:0000398">
    <property type="term" value="P:mRNA splicing, via spliceosome"/>
    <property type="evidence" value="ECO:0000250"/>
    <property type="project" value="UniProtKB"/>
</dbReference>
<dbReference type="GO" id="GO:0007283">
    <property type="term" value="P:spermatogenesis"/>
    <property type="evidence" value="ECO:0007669"/>
    <property type="project" value="Ensembl"/>
</dbReference>
<dbReference type="FunFam" id="3.80.10.10:FF:000026">
    <property type="entry name" value="U2 small nuclear ribonucleoprotein A"/>
    <property type="match status" value="1"/>
</dbReference>
<dbReference type="Gene3D" id="3.80.10.10">
    <property type="entry name" value="Ribonuclease Inhibitor"/>
    <property type="match status" value="1"/>
</dbReference>
<dbReference type="InterPro" id="IPR001611">
    <property type="entry name" value="Leu-rich_rpt"/>
</dbReference>
<dbReference type="InterPro" id="IPR032675">
    <property type="entry name" value="LRR_dom_sf"/>
</dbReference>
<dbReference type="InterPro" id="IPR044640">
    <property type="entry name" value="RU2A"/>
</dbReference>
<dbReference type="InterPro" id="IPR003603">
    <property type="entry name" value="U2A'_phosphoprotein32A_C"/>
</dbReference>
<dbReference type="PANTHER" id="PTHR10552">
    <property type="entry name" value="U2 SMALL NUCLEAR RIBONUCLEOPROTEIN A"/>
    <property type="match status" value="1"/>
</dbReference>
<dbReference type="PANTHER" id="PTHR10552:SF6">
    <property type="entry name" value="U2 SMALL NUCLEAR RIBONUCLEOPROTEIN A"/>
    <property type="match status" value="1"/>
</dbReference>
<dbReference type="Pfam" id="PF14580">
    <property type="entry name" value="LRR_9"/>
    <property type="match status" value="1"/>
</dbReference>
<dbReference type="SMART" id="SM00446">
    <property type="entry name" value="LRRcap"/>
    <property type="match status" value="1"/>
</dbReference>
<dbReference type="SUPFAM" id="SSF52058">
    <property type="entry name" value="L domain-like"/>
    <property type="match status" value="1"/>
</dbReference>
<dbReference type="PROSITE" id="PS51450">
    <property type="entry name" value="LRR"/>
    <property type="match status" value="4"/>
</dbReference>
<reference key="1">
    <citation type="journal article" date="2002" name="Immunol. Lett.">
        <title>Cloning the cDNA for murine U2 snRNP-A' gene and its differential expression in lymphocyte development.</title>
        <authorList>
            <person name="Antica M."/>
            <person name="Kusic B."/>
            <person name="Hranilovic D."/>
            <person name="Dietz A.B."/>
            <person name="Vuk-Pavlovic S."/>
        </authorList>
    </citation>
    <scope>NUCLEOTIDE SEQUENCE [MRNA]</scope>
</reference>
<reference key="2">
    <citation type="journal article" date="2005" name="Science">
        <title>The transcriptional landscape of the mammalian genome.</title>
        <authorList>
            <person name="Carninci P."/>
            <person name="Kasukawa T."/>
            <person name="Katayama S."/>
            <person name="Gough J."/>
            <person name="Frith M.C."/>
            <person name="Maeda N."/>
            <person name="Oyama R."/>
            <person name="Ravasi T."/>
            <person name="Lenhard B."/>
            <person name="Wells C."/>
            <person name="Kodzius R."/>
            <person name="Shimokawa K."/>
            <person name="Bajic V.B."/>
            <person name="Brenner S.E."/>
            <person name="Batalov S."/>
            <person name="Forrest A.R."/>
            <person name="Zavolan M."/>
            <person name="Davis M.J."/>
            <person name="Wilming L.G."/>
            <person name="Aidinis V."/>
            <person name="Allen J.E."/>
            <person name="Ambesi-Impiombato A."/>
            <person name="Apweiler R."/>
            <person name="Aturaliya R.N."/>
            <person name="Bailey T.L."/>
            <person name="Bansal M."/>
            <person name="Baxter L."/>
            <person name="Beisel K.W."/>
            <person name="Bersano T."/>
            <person name="Bono H."/>
            <person name="Chalk A.M."/>
            <person name="Chiu K.P."/>
            <person name="Choudhary V."/>
            <person name="Christoffels A."/>
            <person name="Clutterbuck D.R."/>
            <person name="Crowe M.L."/>
            <person name="Dalla E."/>
            <person name="Dalrymple B.P."/>
            <person name="de Bono B."/>
            <person name="Della Gatta G."/>
            <person name="di Bernardo D."/>
            <person name="Down T."/>
            <person name="Engstrom P."/>
            <person name="Fagiolini M."/>
            <person name="Faulkner G."/>
            <person name="Fletcher C.F."/>
            <person name="Fukushima T."/>
            <person name="Furuno M."/>
            <person name="Futaki S."/>
            <person name="Gariboldi M."/>
            <person name="Georgii-Hemming P."/>
            <person name="Gingeras T.R."/>
            <person name="Gojobori T."/>
            <person name="Green R.E."/>
            <person name="Gustincich S."/>
            <person name="Harbers M."/>
            <person name="Hayashi Y."/>
            <person name="Hensch T.K."/>
            <person name="Hirokawa N."/>
            <person name="Hill D."/>
            <person name="Huminiecki L."/>
            <person name="Iacono M."/>
            <person name="Ikeo K."/>
            <person name="Iwama A."/>
            <person name="Ishikawa T."/>
            <person name="Jakt M."/>
            <person name="Kanapin A."/>
            <person name="Katoh M."/>
            <person name="Kawasawa Y."/>
            <person name="Kelso J."/>
            <person name="Kitamura H."/>
            <person name="Kitano H."/>
            <person name="Kollias G."/>
            <person name="Krishnan S.P."/>
            <person name="Kruger A."/>
            <person name="Kummerfeld S.K."/>
            <person name="Kurochkin I.V."/>
            <person name="Lareau L.F."/>
            <person name="Lazarevic D."/>
            <person name="Lipovich L."/>
            <person name="Liu J."/>
            <person name="Liuni S."/>
            <person name="McWilliam S."/>
            <person name="Madan Babu M."/>
            <person name="Madera M."/>
            <person name="Marchionni L."/>
            <person name="Matsuda H."/>
            <person name="Matsuzawa S."/>
            <person name="Miki H."/>
            <person name="Mignone F."/>
            <person name="Miyake S."/>
            <person name="Morris K."/>
            <person name="Mottagui-Tabar S."/>
            <person name="Mulder N."/>
            <person name="Nakano N."/>
            <person name="Nakauchi H."/>
            <person name="Ng P."/>
            <person name="Nilsson R."/>
            <person name="Nishiguchi S."/>
            <person name="Nishikawa S."/>
            <person name="Nori F."/>
            <person name="Ohara O."/>
            <person name="Okazaki Y."/>
            <person name="Orlando V."/>
            <person name="Pang K.C."/>
            <person name="Pavan W.J."/>
            <person name="Pavesi G."/>
            <person name="Pesole G."/>
            <person name="Petrovsky N."/>
            <person name="Piazza S."/>
            <person name="Reed J."/>
            <person name="Reid J.F."/>
            <person name="Ring B.Z."/>
            <person name="Ringwald M."/>
            <person name="Rost B."/>
            <person name="Ruan Y."/>
            <person name="Salzberg S.L."/>
            <person name="Sandelin A."/>
            <person name="Schneider C."/>
            <person name="Schoenbach C."/>
            <person name="Sekiguchi K."/>
            <person name="Semple C.A."/>
            <person name="Seno S."/>
            <person name="Sessa L."/>
            <person name="Sheng Y."/>
            <person name="Shibata Y."/>
            <person name="Shimada H."/>
            <person name="Shimada K."/>
            <person name="Silva D."/>
            <person name="Sinclair B."/>
            <person name="Sperling S."/>
            <person name="Stupka E."/>
            <person name="Sugiura K."/>
            <person name="Sultana R."/>
            <person name="Takenaka Y."/>
            <person name="Taki K."/>
            <person name="Tammoja K."/>
            <person name="Tan S.L."/>
            <person name="Tang S."/>
            <person name="Taylor M.S."/>
            <person name="Tegner J."/>
            <person name="Teichmann S.A."/>
            <person name="Ueda H.R."/>
            <person name="van Nimwegen E."/>
            <person name="Verardo R."/>
            <person name="Wei C.L."/>
            <person name="Yagi K."/>
            <person name="Yamanishi H."/>
            <person name="Zabarovsky E."/>
            <person name="Zhu S."/>
            <person name="Zimmer A."/>
            <person name="Hide W."/>
            <person name="Bult C."/>
            <person name="Grimmond S.M."/>
            <person name="Teasdale R.D."/>
            <person name="Liu E.T."/>
            <person name="Brusic V."/>
            <person name="Quackenbush J."/>
            <person name="Wahlestedt C."/>
            <person name="Mattick J.S."/>
            <person name="Hume D.A."/>
            <person name="Kai C."/>
            <person name="Sasaki D."/>
            <person name="Tomaru Y."/>
            <person name="Fukuda S."/>
            <person name="Kanamori-Katayama M."/>
            <person name="Suzuki M."/>
            <person name="Aoki J."/>
            <person name="Arakawa T."/>
            <person name="Iida J."/>
            <person name="Imamura K."/>
            <person name="Itoh M."/>
            <person name="Kato T."/>
            <person name="Kawaji H."/>
            <person name="Kawagashira N."/>
            <person name="Kawashima T."/>
            <person name="Kojima M."/>
            <person name="Kondo S."/>
            <person name="Konno H."/>
            <person name="Nakano K."/>
            <person name="Ninomiya N."/>
            <person name="Nishio T."/>
            <person name="Okada M."/>
            <person name="Plessy C."/>
            <person name="Shibata K."/>
            <person name="Shiraki T."/>
            <person name="Suzuki S."/>
            <person name="Tagami M."/>
            <person name="Waki K."/>
            <person name="Watahiki A."/>
            <person name="Okamura-Oho Y."/>
            <person name="Suzuki H."/>
            <person name="Kawai J."/>
            <person name="Hayashizaki Y."/>
        </authorList>
    </citation>
    <scope>NUCLEOTIDE SEQUENCE [LARGE SCALE MRNA]</scope>
    <source>
        <strain>C57BL/6J</strain>
        <strain>NOD</strain>
        <tissue>Bone marrow</tissue>
        <tissue>Thymus</tissue>
    </source>
</reference>
<reference key="3">
    <citation type="journal article" date="2004" name="Genome Res.">
        <title>The status, quality, and expansion of the NIH full-length cDNA project: the Mammalian Gene Collection (MGC).</title>
        <authorList>
            <consortium name="The MGC Project Team"/>
        </authorList>
    </citation>
    <scope>NUCLEOTIDE SEQUENCE [LARGE SCALE MRNA]</scope>
</reference>
<reference key="4">
    <citation type="journal article" date="2007" name="Proc. Natl. Acad. Sci. U.S.A.">
        <title>Large-scale phosphorylation analysis of mouse liver.</title>
        <authorList>
            <person name="Villen J."/>
            <person name="Beausoleil S.A."/>
            <person name="Gerber S.A."/>
            <person name="Gygi S.P."/>
        </authorList>
    </citation>
    <scope>IDENTIFICATION BY MASS SPECTROMETRY [LARGE SCALE ANALYSIS]</scope>
    <source>
        <tissue>Liver</tissue>
    </source>
</reference>
<reference key="5">
    <citation type="journal article" date="2010" name="Cell">
        <title>A tissue-specific atlas of mouse protein phosphorylation and expression.</title>
        <authorList>
            <person name="Huttlin E.L."/>
            <person name="Jedrychowski M.P."/>
            <person name="Elias J.E."/>
            <person name="Goswami T."/>
            <person name="Rad R."/>
            <person name="Beausoleil S.A."/>
            <person name="Villen J."/>
            <person name="Haas W."/>
            <person name="Sowa M.E."/>
            <person name="Gygi S.P."/>
        </authorList>
    </citation>
    <scope>IDENTIFICATION BY MASS SPECTROMETRY [LARGE SCALE ANALYSIS]</scope>
    <source>
        <tissue>Brain</tissue>
        <tissue>Heart</tissue>
        <tissue>Kidney</tissue>
        <tissue>Liver</tissue>
        <tissue>Lung</tissue>
        <tissue>Pancreas</tissue>
        <tissue>Spleen</tissue>
        <tissue>Testis</tissue>
    </source>
</reference>
<reference key="6">
    <citation type="journal article" date="2013" name="Mol. Cell">
        <title>SIRT5-mediated lysine desuccinylation impacts diverse metabolic pathways.</title>
        <authorList>
            <person name="Park J."/>
            <person name="Chen Y."/>
            <person name="Tishkoff D.X."/>
            <person name="Peng C."/>
            <person name="Tan M."/>
            <person name="Dai L."/>
            <person name="Xie Z."/>
            <person name="Zhang Y."/>
            <person name="Zwaans B.M."/>
            <person name="Skinner M.E."/>
            <person name="Lombard D.B."/>
            <person name="Zhao Y."/>
        </authorList>
    </citation>
    <scope>ACETYLATION [LARGE SCALE ANALYSIS] AT LYS-172</scope>
    <scope>IDENTIFICATION BY MASS SPECTROMETRY [LARGE SCALE ANALYSIS]</scope>
    <source>
        <tissue>Embryonic fibroblast</tissue>
    </source>
</reference>
<evidence type="ECO:0000250" key="1">
    <source>
        <dbReference type="UniProtKB" id="P09661"/>
    </source>
</evidence>
<evidence type="ECO:0000256" key="2">
    <source>
        <dbReference type="SAM" id="MobiDB-lite"/>
    </source>
</evidence>
<evidence type="ECO:0000305" key="3"/>
<evidence type="ECO:0007744" key="4">
    <source>
    </source>
</evidence>
<comment type="function">
    <text evidence="1">Involved in pre-mRNA splicing as component of the spliceosome. Associated with sn-RNP U2, where it contributes to the binding of stem loop IV of U2 snRNA.</text>
</comment>
<comment type="subunit">
    <text evidence="1">Identified in the spliceosome B complex. Identified in the spliceosome C complex. Found in a pre-mRNA splicing complex with SFRS4, SFRS5, SNRNP70, SNRPA1, SRRM1 and SRRM2. Found in a pre-mRNA exonic splicing enhancer (ESE) complex with SNRNP70, SNRPA1, SRRM1 and TRA2B. Contributes to the binding of stem loop IV of U2 snRNA with SNRPB2.</text>
</comment>
<comment type="subcellular location">
    <subcellularLocation>
        <location evidence="1">Nucleus</location>
    </subcellularLocation>
</comment>
<comment type="similarity">
    <text evidence="3">Belongs to the U2 small nuclear ribonucleoprotein A family.</text>
</comment>